<reference key="1">
    <citation type="journal article" date="1995" name="Gene">
        <title>The ATP synthase (F1F0) of Streptomyces lividans: sequencing of the atp operon and phylogenetic considerations with subunit beta.</title>
        <authorList>
            <person name="Hensel M."/>
            <person name="Lill H."/>
            <person name="Schmid R."/>
            <person name="Deckers-Hebestreit G."/>
            <person name="Altendorf K."/>
        </authorList>
    </citation>
    <scope>NUCLEOTIDE SEQUENCE [GENOMIC DNA]</scope>
    <scope>PROTEIN SEQUENCE OF 2-14</scope>
    <source>
        <strain>66 / 1326</strain>
    </source>
</reference>
<organism>
    <name type="scientific">Streptomyces lividans</name>
    <dbReference type="NCBI Taxonomy" id="1916"/>
    <lineage>
        <taxon>Bacteria</taxon>
        <taxon>Bacillati</taxon>
        <taxon>Actinomycetota</taxon>
        <taxon>Actinomycetes</taxon>
        <taxon>Kitasatosporales</taxon>
        <taxon>Streptomycetaceae</taxon>
        <taxon>Streptomyces</taxon>
    </lineage>
</organism>
<feature type="initiator methionine" description="Removed" evidence="3">
    <location>
        <position position="1"/>
    </location>
</feature>
<feature type="chain" id="PRO_0000188215" description="ATP synthase epsilon chain">
    <location>
        <begin position="2"/>
        <end position="124"/>
    </location>
</feature>
<feature type="region of interest" description="Disordered" evidence="2">
    <location>
        <begin position="99"/>
        <end position="124"/>
    </location>
</feature>
<feature type="compositionally biased region" description="Basic and acidic residues" evidence="2">
    <location>
        <begin position="99"/>
        <end position="118"/>
    </location>
</feature>
<name>ATPE_STRLI</name>
<sequence>MAAELHVALVAADREVWSGEATLVVARTTSGDIGVMPGHQPLLGVLESGPVTIRTSDGGTVVAAVHGGFISFADNKLSLLAEVAELSDEIDVHRAERKLEQAKTEGDAHAERRADVRLRAAAGR</sequence>
<evidence type="ECO:0000250" key="1"/>
<evidence type="ECO:0000256" key="2">
    <source>
        <dbReference type="SAM" id="MobiDB-lite"/>
    </source>
</evidence>
<evidence type="ECO:0000269" key="3">
    <source>
    </source>
</evidence>
<evidence type="ECO:0000305" key="4"/>
<accession>P0A2Z7</accession>
<accession>P50011</accession>
<keyword id="KW-0066">ATP synthesis</keyword>
<keyword id="KW-1003">Cell membrane</keyword>
<keyword id="KW-0139">CF(1)</keyword>
<keyword id="KW-0903">Direct protein sequencing</keyword>
<keyword id="KW-0375">Hydrogen ion transport</keyword>
<keyword id="KW-0406">Ion transport</keyword>
<keyword id="KW-0472">Membrane</keyword>
<keyword id="KW-0813">Transport</keyword>
<dbReference type="EMBL" id="Z22606">
    <property type="protein sequence ID" value="CAA80328.1"/>
    <property type="molecule type" value="Genomic_DNA"/>
</dbReference>
<dbReference type="PIR" id="S37548">
    <property type="entry name" value="S37548"/>
</dbReference>
<dbReference type="SMR" id="P0A2Z7"/>
<dbReference type="GO" id="GO:0005886">
    <property type="term" value="C:plasma membrane"/>
    <property type="evidence" value="ECO:0007669"/>
    <property type="project" value="UniProtKB-SubCell"/>
</dbReference>
<dbReference type="GO" id="GO:0045259">
    <property type="term" value="C:proton-transporting ATP synthase complex"/>
    <property type="evidence" value="ECO:0007669"/>
    <property type="project" value="UniProtKB-KW"/>
</dbReference>
<dbReference type="GO" id="GO:0005524">
    <property type="term" value="F:ATP binding"/>
    <property type="evidence" value="ECO:0007669"/>
    <property type="project" value="UniProtKB-UniRule"/>
</dbReference>
<dbReference type="GO" id="GO:0046933">
    <property type="term" value="F:proton-transporting ATP synthase activity, rotational mechanism"/>
    <property type="evidence" value="ECO:0007669"/>
    <property type="project" value="UniProtKB-UniRule"/>
</dbReference>
<dbReference type="CDD" id="cd12152">
    <property type="entry name" value="F1-ATPase_delta"/>
    <property type="match status" value="1"/>
</dbReference>
<dbReference type="FunFam" id="2.60.15.10:FF:000015">
    <property type="entry name" value="ATP synthase epsilon chain"/>
    <property type="match status" value="1"/>
</dbReference>
<dbReference type="Gene3D" id="2.60.15.10">
    <property type="entry name" value="F0F1 ATP synthase delta/epsilon subunit, N-terminal"/>
    <property type="match status" value="1"/>
</dbReference>
<dbReference type="HAMAP" id="MF_00530">
    <property type="entry name" value="ATP_synth_epsil_bac"/>
    <property type="match status" value="1"/>
</dbReference>
<dbReference type="InterPro" id="IPR001469">
    <property type="entry name" value="ATP_synth_F1_dsu/esu"/>
</dbReference>
<dbReference type="InterPro" id="IPR020546">
    <property type="entry name" value="ATP_synth_F1_dsu/esu_N"/>
</dbReference>
<dbReference type="InterPro" id="IPR036771">
    <property type="entry name" value="ATPsynth_dsu/esu_N"/>
</dbReference>
<dbReference type="NCBIfam" id="TIGR01216">
    <property type="entry name" value="ATP_synt_epsi"/>
    <property type="match status" value="1"/>
</dbReference>
<dbReference type="NCBIfam" id="NF009977">
    <property type="entry name" value="PRK13442.1"/>
    <property type="match status" value="1"/>
</dbReference>
<dbReference type="PANTHER" id="PTHR13822">
    <property type="entry name" value="ATP SYNTHASE DELTA/EPSILON CHAIN"/>
    <property type="match status" value="1"/>
</dbReference>
<dbReference type="PANTHER" id="PTHR13822:SF10">
    <property type="entry name" value="ATP SYNTHASE EPSILON CHAIN, CHLOROPLASTIC"/>
    <property type="match status" value="1"/>
</dbReference>
<dbReference type="Pfam" id="PF02823">
    <property type="entry name" value="ATP-synt_DE_N"/>
    <property type="match status" value="1"/>
</dbReference>
<dbReference type="SUPFAM" id="SSF51344">
    <property type="entry name" value="Epsilon subunit of F1F0-ATP synthase N-terminal domain"/>
    <property type="match status" value="1"/>
</dbReference>
<protein>
    <recommendedName>
        <fullName>ATP synthase epsilon chain</fullName>
    </recommendedName>
    <alternativeName>
        <fullName>ATP synthase F1 sector epsilon subunit</fullName>
    </alternativeName>
    <alternativeName>
        <fullName>F-ATPase epsilon subunit</fullName>
    </alternativeName>
</protein>
<comment type="function">
    <text>Produces ATP from ADP in the presence of a proton gradient across the membrane.</text>
</comment>
<comment type="subunit">
    <text>F-type ATPases have 2 components, CF(1) - the catalytic core - and CF(0) - the membrane proton channel. CF(1) has five subunits: alpha(3), beta(3), gamma(1), delta(1), epsilon(1). CF(0) has three main subunits: a, b and c.</text>
</comment>
<comment type="subcellular location">
    <subcellularLocation>
        <location evidence="1">Cell membrane</location>
        <topology evidence="1">Peripheral membrane protein</topology>
    </subcellularLocation>
</comment>
<comment type="similarity">
    <text evidence="4">Belongs to the ATPase epsilon chain family.</text>
</comment>
<proteinExistence type="evidence at protein level"/>
<gene>
    <name type="primary">atpC</name>
</gene>